<gene>
    <name type="primary">CTSF</name>
</gene>
<keyword id="KW-0002">3D-structure</keyword>
<keyword id="KW-0225">Disease variant</keyword>
<keyword id="KW-1015">Disulfide bond</keyword>
<keyword id="KW-0325">Glycoprotein</keyword>
<keyword id="KW-0378">Hydrolase</keyword>
<keyword id="KW-0458">Lysosome</keyword>
<keyword id="KW-0523">Neurodegeneration</keyword>
<keyword id="KW-0525">Neuronal ceroid lipofuscinosis</keyword>
<keyword id="KW-0645">Protease</keyword>
<keyword id="KW-1267">Proteomics identification</keyword>
<keyword id="KW-1185">Reference proteome</keyword>
<keyword id="KW-0732">Signal</keyword>
<keyword id="KW-0788">Thiol protease</keyword>
<keyword id="KW-0865">Zymogen</keyword>
<feature type="signal peptide" evidence="2">
    <location>
        <begin position="1"/>
        <end position="19"/>
    </location>
</feature>
<feature type="propeptide" id="PRO_0000026202" description="Activation peptide">
    <location>
        <begin position="20"/>
        <end position="270"/>
    </location>
</feature>
<feature type="chain" id="PRO_0000026203" description="Cathepsin F">
    <location>
        <begin position="271"/>
        <end position="484"/>
    </location>
</feature>
<feature type="active site" evidence="5">
    <location>
        <position position="295"/>
    </location>
</feature>
<feature type="active site" evidence="5">
    <location>
        <position position="431"/>
    </location>
</feature>
<feature type="active site" evidence="1">
    <location>
        <position position="451"/>
    </location>
</feature>
<feature type="glycosylation site" description="N-linked (GlcNAc...) asparagine" evidence="2">
    <location>
        <position position="160"/>
    </location>
</feature>
<feature type="glycosylation site" description="N-linked (GlcNAc...) asparagine" evidence="2">
    <location>
        <position position="195"/>
    </location>
</feature>
<feature type="glycosylation site" description="N-linked (GlcNAc...) asparagine" evidence="6">
    <location>
        <position position="367"/>
    </location>
</feature>
<feature type="glycosylation site" description="N-linked (GlcNAc...) asparagine" evidence="6">
    <location>
        <position position="378"/>
    </location>
</feature>
<feature type="glycosylation site" description="N-linked (GlcNAc...) asparagine" evidence="6">
    <location>
        <position position="440"/>
    </location>
</feature>
<feature type="disulfide bond" evidence="5">
    <location>
        <begin position="292"/>
        <end position="333"/>
    </location>
</feature>
<feature type="disulfide bond" evidence="5">
    <location>
        <begin position="326"/>
        <end position="366"/>
    </location>
</feature>
<feature type="disulfide bond" evidence="1">
    <location>
        <begin position="424"/>
        <end position="472"/>
    </location>
</feature>
<feature type="sequence variant" id="VAR_051513" description="In dbSNP:rs11550508.">
    <original>Q</original>
    <variation>R</variation>
    <location>
        <position position="153"/>
    </location>
</feature>
<feature type="sequence variant" id="VAR_070159" description="In CLN13; dbSNP:rs143889283." evidence="7">
    <original>Y</original>
    <variation>C</variation>
    <location>
        <position position="231"/>
    </location>
</feature>
<feature type="sequence variant" id="VAR_070160" description="In CLN13; dbSNP:rs397514731." evidence="7">
    <original>Q</original>
    <variation>R</variation>
    <location>
        <position position="321"/>
    </location>
</feature>
<feature type="sequence variant" id="VAR_070161" description="In CLN13; dbSNP:rs397514732." evidence="7">
    <original>G</original>
    <variation>A</variation>
    <location>
        <position position="458"/>
    </location>
</feature>
<feature type="sequence variant" id="VAR_070162" description="In CLN13; dbSNP:rs397514733." evidence="7">
    <original>S</original>
    <variation>L</variation>
    <location>
        <position position="480"/>
    </location>
</feature>
<feature type="sequence conflict" description="In Ref. 5; AAF13146." evidence="8" ref="5">
    <original>E</original>
    <variation>K</variation>
    <location>
        <position position="305"/>
    </location>
</feature>
<feature type="sequence conflict" description="In Ref. 9." evidence="8" ref="9">
    <original>SDVPFWAIKNSWGTDWGEKGYYYLHRGSGACGVNTMASSAVVD</original>
    <variation>EFRCLSCIQPGHRQGWDHSISGPLEGK</variation>
    <location>
        <begin position="442"/>
        <end position="484"/>
    </location>
</feature>
<feature type="helix" evidence="9">
    <location>
        <begin position="277"/>
        <end position="280"/>
    </location>
</feature>
<feature type="strand" evidence="9">
    <location>
        <begin position="291"/>
        <end position="293"/>
    </location>
</feature>
<feature type="helix" evidence="9">
    <location>
        <begin position="295"/>
        <end position="312"/>
    </location>
</feature>
<feature type="helix" evidence="9">
    <location>
        <begin position="320"/>
        <end position="326"/>
    </location>
</feature>
<feature type="strand" evidence="9">
    <location>
        <begin position="328"/>
        <end position="330"/>
    </location>
</feature>
<feature type="helix" evidence="9">
    <location>
        <begin position="338"/>
        <end position="348"/>
    </location>
</feature>
<feature type="turn" evidence="9">
    <location>
        <begin position="354"/>
        <end position="356"/>
    </location>
</feature>
<feature type="helix" evidence="9">
    <location>
        <begin position="370"/>
        <end position="372"/>
    </location>
</feature>
<feature type="strand" evidence="9">
    <location>
        <begin position="378"/>
        <end position="382"/>
    </location>
</feature>
<feature type="helix" evidence="9">
    <location>
        <begin position="387"/>
        <end position="397"/>
    </location>
</feature>
<feature type="strand" evidence="9">
    <location>
        <begin position="400"/>
        <end position="404"/>
    </location>
</feature>
<feature type="helix" evidence="9">
    <location>
        <begin position="407"/>
        <end position="411"/>
    </location>
</feature>
<feature type="strand" evidence="9">
    <location>
        <begin position="414"/>
        <end position="417"/>
    </location>
</feature>
<feature type="helix" evidence="9">
    <location>
        <begin position="421"/>
        <end position="423"/>
    </location>
</feature>
<feature type="strand" evidence="9">
    <location>
        <begin position="431"/>
        <end position="441"/>
    </location>
</feature>
<feature type="strand" evidence="9">
    <location>
        <begin position="444"/>
        <end position="450"/>
    </location>
</feature>
<feature type="strand" evidence="9">
    <location>
        <begin position="462"/>
        <end position="469"/>
    </location>
</feature>
<feature type="helix" evidence="9">
    <location>
        <begin position="471"/>
        <end position="473"/>
    </location>
</feature>
<feature type="turn" evidence="9">
    <location>
        <begin position="474"/>
        <end position="477"/>
    </location>
</feature>
<feature type="strand" evidence="9">
    <location>
        <begin position="479"/>
        <end position="482"/>
    </location>
</feature>
<name>CATF_HUMAN</name>
<proteinExistence type="evidence at protein level"/>
<protein>
    <recommendedName>
        <fullName>Cathepsin F</fullName>
        <shortName>CATSF</shortName>
        <ecNumber>3.4.22.41</ecNumber>
    </recommendedName>
</protein>
<sequence>MAPWLQLLSLLGLLPGAVAAPAQPRAASFQAWGPPSPELLAPTRFALEMFNRGRAAGTRAVLGLVRGRVRRAGQGSLYSLEATLEEPPCNDPMVCRLPVSKKTLLCSFQVLDELGRHVLLRKDCGPVDTKVPGAGEPKSAFTQGSAMISSLSQNHPDNRNETFSSVISLLNEDPLSQDLPVKMASIFKNFVITYNRTYESKEEARWRLSVFVNNMVRAQKIQALDRGTAQYGVTKFSDLTEEEFRTIYLNTLLRKEPGNKMKQAKSVGDLAPPEWDWRSKGAVTKVKDQGMCGSCWAFSVTGNVEGQWFLNQGTLLSLSEQELLDCDKMDKACMGGLPSNAYSAIKNLGGLETEDDYSYQGHMQSCNFSAEKAKVYINDSVELSQNEQKLAAWLAKRGPISVAINAFGMQFYRHGISRPLRPLCSPWLIDHAVLLVGYGNRSDVPFWAIKNSWGTDWGEKGYYYLHRGSGACGVNTMASSAVVD</sequence>
<dbReference type="EC" id="3.4.22.41"/>
<dbReference type="EMBL" id="AJ007331">
    <property type="protein sequence ID" value="CAB42883.1"/>
    <property type="molecule type" value="mRNA"/>
</dbReference>
<dbReference type="EMBL" id="AF088886">
    <property type="protein sequence ID" value="AAD26616.2"/>
    <property type="molecule type" value="mRNA"/>
</dbReference>
<dbReference type="EMBL" id="AF132894">
    <property type="protein sequence ID" value="AAD41790.1"/>
    <property type="molecule type" value="Genomic_DNA"/>
</dbReference>
<dbReference type="EMBL" id="AF136279">
    <property type="protein sequence ID" value="AAF13146.1"/>
    <property type="molecule type" value="mRNA"/>
</dbReference>
<dbReference type="EMBL" id="AF071748">
    <property type="protein sequence ID" value="AAC78838.1"/>
    <property type="molecule type" value="mRNA"/>
</dbReference>
<dbReference type="EMBL" id="AF071749">
    <property type="protein sequence ID" value="AAC78839.1"/>
    <property type="molecule type" value="mRNA"/>
</dbReference>
<dbReference type="EMBL" id="AK313657">
    <property type="protein sequence ID" value="BAG36411.1"/>
    <property type="molecule type" value="mRNA"/>
</dbReference>
<dbReference type="EMBL" id="BC011682">
    <property type="protein sequence ID" value="AAH11682.1"/>
    <property type="molecule type" value="mRNA"/>
</dbReference>
<dbReference type="EMBL" id="BC036451">
    <property type="protein sequence ID" value="AAH36451.1"/>
    <property type="molecule type" value="mRNA"/>
</dbReference>
<dbReference type="EMBL" id="AL137742">
    <property type="protein sequence ID" value="CAB70900.1"/>
    <property type="molecule type" value="mRNA"/>
</dbReference>
<dbReference type="CCDS" id="CCDS8144.1"/>
<dbReference type="RefSeq" id="NP_003784.2">
    <property type="nucleotide sequence ID" value="NM_003793.3"/>
</dbReference>
<dbReference type="PDB" id="1M6D">
    <property type="method" value="X-ray"/>
    <property type="resolution" value="1.70 A"/>
    <property type="chains" value="A/B=271-484"/>
</dbReference>
<dbReference type="PDBsum" id="1M6D"/>
<dbReference type="SMR" id="Q9UBX1"/>
<dbReference type="BioGRID" id="114261">
    <property type="interactions" value="43"/>
</dbReference>
<dbReference type="FunCoup" id="Q9UBX1">
    <property type="interactions" value="512"/>
</dbReference>
<dbReference type="IntAct" id="Q9UBX1">
    <property type="interactions" value="39"/>
</dbReference>
<dbReference type="STRING" id="9606.ENSP00000310832"/>
<dbReference type="BindingDB" id="Q9UBX1"/>
<dbReference type="ChEMBL" id="CHEMBL2517"/>
<dbReference type="DrugBank" id="DB02243">
    <property type="generic name" value="4-Morpholin-4-Yl-Piperidine-1-Carboxylic Acid [1-(3-Benzenesulfonyl-1-Propyl-Allylcarbamoyl)-2-Phenylethyl]-Amide"/>
</dbReference>
<dbReference type="DrugBank" id="DB01871">
    <property type="generic name" value="[1-(1-Benzyl-3-Hydroxy-2-Oxo-Propylcarbamoyl)-2-Phenyl-Ethyl]-Carbamic Acid Benzyl Ester"/>
</dbReference>
<dbReference type="DrugBank" id="DB01810">
    <property type="generic name" value="[1-(1-Methyl-4,5-Dioxo-Pent-2-Enylcarbamoyl)-2-Phenyl-Ethyl]-Carbamic Acid Benzyl Ester"/>
</dbReference>
<dbReference type="DrugBank" id="DB08775">
    <property type="generic name" value="Benzoyl-tyrosine-alanine-fluoro-methyl ketone"/>
</dbReference>
<dbReference type="DrugBank" id="DB03536">
    <property type="generic name" value="Benzyl N-[(2S)-5-(diaminomethylamino)-1-[[(2S)-4-fluoro-3-oxobutan-2-yl]amino]-1-oxopentan-2-yl]carbamate"/>
</dbReference>
<dbReference type="DrugBank" id="DB07913">
    <property type="generic name" value="HOMOPHENYLALANINYLMETHANE"/>
</dbReference>
<dbReference type="DrugBank" id="DB03691">
    <property type="generic name" value="WRR-112"/>
</dbReference>
<dbReference type="DrugBank" id="DB03573">
    <property type="generic name" value="WRR-99"/>
</dbReference>
<dbReference type="DrugCentral" id="Q9UBX1"/>
<dbReference type="GuidetoPHARMACOLOGY" id="2347"/>
<dbReference type="MEROPS" id="C01.018"/>
<dbReference type="GlyConnect" id="1080">
    <property type="glycosylation" value="4 N-Linked glycans (2 sites)"/>
</dbReference>
<dbReference type="GlyCosmos" id="Q9UBX1">
    <property type="glycosylation" value="5 sites, 3 glycans"/>
</dbReference>
<dbReference type="GlyGen" id="Q9UBX1">
    <property type="glycosylation" value="5 sites, 21 N-linked glycans (3 sites)"/>
</dbReference>
<dbReference type="iPTMnet" id="Q9UBX1"/>
<dbReference type="PhosphoSitePlus" id="Q9UBX1"/>
<dbReference type="BioMuta" id="CTSF"/>
<dbReference type="DMDM" id="12643325"/>
<dbReference type="jPOST" id="Q9UBX1"/>
<dbReference type="MassIVE" id="Q9UBX1"/>
<dbReference type="PaxDb" id="9606-ENSP00000310832"/>
<dbReference type="PeptideAtlas" id="Q9UBX1"/>
<dbReference type="ProteomicsDB" id="84089"/>
<dbReference type="Antibodypedia" id="30202">
    <property type="antibodies" value="284 antibodies from 33 providers"/>
</dbReference>
<dbReference type="DNASU" id="8722"/>
<dbReference type="Ensembl" id="ENST00000310325.10">
    <property type="protein sequence ID" value="ENSP00000310832.5"/>
    <property type="gene ID" value="ENSG00000174080.12"/>
</dbReference>
<dbReference type="GeneID" id="8722"/>
<dbReference type="KEGG" id="hsa:8722"/>
<dbReference type="MANE-Select" id="ENST00000310325.10">
    <property type="protein sequence ID" value="ENSP00000310832.5"/>
    <property type="RefSeq nucleotide sequence ID" value="NM_003793.4"/>
    <property type="RefSeq protein sequence ID" value="NP_003784.2"/>
</dbReference>
<dbReference type="UCSC" id="uc001oip.4">
    <property type="organism name" value="human"/>
</dbReference>
<dbReference type="AGR" id="HGNC:2531"/>
<dbReference type="CTD" id="8722"/>
<dbReference type="DisGeNET" id="8722"/>
<dbReference type="GeneCards" id="CTSF"/>
<dbReference type="HGNC" id="HGNC:2531">
    <property type="gene designation" value="CTSF"/>
</dbReference>
<dbReference type="HPA" id="ENSG00000174080">
    <property type="expression patterns" value="Low tissue specificity"/>
</dbReference>
<dbReference type="MalaCards" id="CTSF"/>
<dbReference type="MIM" id="603539">
    <property type="type" value="gene"/>
</dbReference>
<dbReference type="MIM" id="615362">
    <property type="type" value="phenotype"/>
</dbReference>
<dbReference type="neXtProt" id="NX_Q9UBX1"/>
<dbReference type="OpenTargets" id="ENSG00000174080"/>
<dbReference type="Orphanet" id="352709">
    <property type="disease" value="CLN13 disease"/>
</dbReference>
<dbReference type="PharmGKB" id="PA27031"/>
<dbReference type="VEuPathDB" id="HostDB:ENSG00000174080"/>
<dbReference type="eggNOG" id="KOG1542">
    <property type="taxonomic scope" value="Eukaryota"/>
</dbReference>
<dbReference type="GeneTree" id="ENSGT00940000162141"/>
<dbReference type="HOGENOM" id="CLU_012184_10_0_1"/>
<dbReference type="InParanoid" id="Q9UBX1"/>
<dbReference type="OMA" id="RSATPFW"/>
<dbReference type="OrthoDB" id="387093at2759"/>
<dbReference type="PAN-GO" id="Q9UBX1">
    <property type="GO annotations" value="4 GO annotations based on evolutionary models"/>
</dbReference>
<dbReference type="PhylomeDB" id="Q9UBX1"/>
<dbReference type="TreeFam" id="TF314550"/>
<dbReference type="BRENDA" id="3.4.22.41">
    <property type="organism ID" value="2681"/>
</dbReference>
<dbReference type="PathwayCommons" id="Q9UBX1"/>
<dbReference type="Reactome" id="R-HSA-2132295">
    <property type="pathway name" value="MHC class II antigen presentation"/>
</dbReference>
<dbReference type="SignaLink" id="Q9UBX1"/>
<dbReference type="SIGNOR" id="Q9UBX1"/>
<dbReference type="BioGRID-ORCS" id="8722">
    <property type="hits" value="30 hits in 1161 CRISPR screens"/>
</dbReference>
<dbReference type="ChiTaRS" id="CTSF">
    <property type="organism name" value="human"/>
</dbReference>
<dbReference type="EvolutionaryTrace" id="Q9UBX1"/>
<dbReference type="GeneWiki" id="Cathepsin_F"/>
<dbReference type="GenomeRNAi" id="8722"/>
<dbReference type="Pharos" id="Q9UBX1">
    <property type="development level" value="Tchem"/>
</dbReference>
<dbReference type="PRO" id="PR:Q9UBX1"/>
<dbReference type="Proteomes" id="UP000005640">
    <property type="component" value="Chromosome 11"/>
</dbReference>
<dbReference type="RNAct" id="Q9UBX1">
    <property type="molecule type" value="protein"/>
</dbReference>
<dbReference type="Bgee" id="ENSG00000174080">
    <property type="expression patterns" value="Expressed in right hemisphere of cerebellum and 207 other cell types or tissues"/>
</dbReference>
<dbReference type="ExpressionAtlas" id="Q9UBX1">
    <property type="expression patterns" value="baseline and differential"/>
</dbReference>
<dbReference type="GO" id="GO:0062023">
    <property type="term" value="C:collagen-containing extracellular matrix"/>
    <property type="evidence" value="ECO:0007005"/>
    <property type="project" value="BHF-UCL"/>
</dbReference>
<dbReference type="GO" id="GO:0005783">
    <property type="term" value="C:endoplasmic reticulum"/>
    <property type="evidence" value="ECO:0000314"/>
    <property type="project" value="HPA"/>
</dbReference>
<dbReference type="GO" id="GO:0070062">
    <property type="term" value="C:extracellular exosome"/>
    <property type="evidence" value="ECO:0007005"/>
    <property type="project" value="UniProtKB"/>
</dbReference>
<dbReference type="GO" id="GO:0005615">
    <property type="term" value="C:extracellular space"/>
    <property type="evidence" value="ECO:0000318"/>
    <property type="project" value="GO_Central"/>
</dbReference>
<dbReference type="GO" id="GO:1903561">
    <property type="term" value="C:extracellular vesicle"/>
    <property type="evidence" value="ECO:0007005"/>
    <property type="project" value="UniProtKB"/>
</dbReference>
<dbReference type="GO" id="GO:0043231">
    <property type="term" value="C:intracellular membrane-bounded organelle"/>
    <property type="evidence" value="ECO:0000314"/>
    <property type="project" value="HPA"/>
</dbReference>
<dbReference type="GO" id="GO:0043202">
    <property type="term" value="C:lysosomal lumen"/>
    <property type="evidence" value="ECO:0000304"/>
    <property type="project" value="Reactome"/>
</dbReference>
<dbReference type="GO" id="GO:0005764">
    <property type="term" value="C:lysosome"/>
    <property type="evidence" value="ECO:0000318"/>
    <property type="project" value="GO_Central"/>
</dbReference>
<dbReference type="GO" id="GO:0005886">
    <property type="term" value="C:plasma membrane"/>
    <property type="evidence" value="ECO:0000314"/>
    <property type="project" value="HPA"/>
</dbReference>
<dbReference type="GO" id="GO:0004197">
    <property type="term" value="F:cysteine-type endopeptidase activity"/>
    <property type="evidence" value="ECO:0000318"/>
    <property type="project" value="GO_Central"/>
</dbReference>
<dbReference type="GO" id="GO:0008234">
    <property type="term" value="F:cysteine-type peptidase activity"/>
    <property type="evidence" value="ECO:0000314"/>
    <property type="project" value="ARUK-UCL"/>
</dbReference>
<dbReference type="GO" id="GO:0019886">
    <property type="term" value="P:antigen processing and presentation of exogenous peptide antigen via MHC class II"/>
    <property type="evidence" value="ECO:0000304"/>
    <property type="project" value="Reactome"/>
</dbReference>
<dbReference type="GO" id="GO:0006508">
    <property type="term" value="P:proteolysis"/>
    <property type="evidence" value="ECO:0000304"/>
    <property type="project" value="ProtInc"/>
</dbReference>
<dbReference type="GO" id="GO:0051603">
    <property type="term" value="P:proteolysis involved in protein catabolic process"/>
    <property type="evidence" value="ECO:0000318"/>
    <property type="project" value="GO_Central"/>
</dbReference>
<dbReference type="CDD" id="cd02248">
    <property type="entry name" value="Peptidase_C1A"/>
    <property type="match status" value="1"/>
</dbReference>
<dbReference type="FunFam" id="1.10.287.2250:FF:000001">
    <property type="entry name" value="Cathepsin F"/>
    <property type="match status" value="1"/>
</dbReference>
<dbReference type="FunFam" id="3.90.70.10:FF:000050">
    <property type="entry name" value="Cathepsin F"/>
    <property type="match status" value="1"/>
</dbReference>
<dbReference type="Gene3D" id="1.10.287.2250">
    <property type="match status" value="1"/>
</dbReference>
<dbReference type="Gene3D" id="3.90.70.10">
    <property type="entry name" value="Cysteine proteinases"/>
    <property type="match status" value="1"/>
</dbReference>
<dbReference type="InterPro" id="IPR038765">
    <property type="entry name" value="Papain-like_cys_pep_sf"/>
</dbReference>
<dbReference type="InterPro" id="IPR000169">
    <property type="entry name" value="Pept_cys_AS"/>
</dbReference>
<dbReference type="InterPro" id="IPR025660">
    <property type="entry name" value="Pept_his_AS"/>
</dbReference>
<dbReference type="InterPro" id="IPR013128">
    <property type="entry name" value="Peptidase_C1A"/>
</dbReference>
<dbReference type="InterPro" id="IPR000668">
    <property type="entry name" value="Peptidase_C1A_C"/>
</dbReference>
<dbReference type="InterPro" id="IPR039417">
    <property type="entry name" value="Peptidase_C1A_papain-like"/>
</dbReference>
<dbReference type="InterPro" id="IPR013201">
    <property type="entry name" value="Prot_inhib_I29"/>
</dbReference>
<dbReference type="PANTHER" id="PTHR12411">
    <property type="entry name" value="CYSTEINE PROTEASE FAMILY C1-RELATED"/>
    <property type="match status" value="1"/>
</dbReference>
<dbReference type="Pfam" id="PF08246">
    <property type="entry name" value="Inhibitor_I29"/>
    <property type="match status" value="1"/>
</dbReference>
<dbReference type="Pfam" id="PF00112">
    <property type="entry name" value="Peptidase_C1"/>
    <property type="match status" value="1"/>
</dbReference>
<dbReference type="PRINTS" id="PR00705">
    <property type="entry name" value="PAPAIN"/>
</dbReference>
<dbReference type="SMART" id="SM00848">
    <property type="entry name" value="Inhibitor_I29"/>
    <property type="match status" value="1"/>
</dbReference>
<dbReference type="SMART" id="SM00645">
    <property type="entry name" value="Pept_C1"/>
    <property type="match status" value="1"/>
</dbReference>
<dbReference type="SUPFAM" id="SSF54001">
    <property type="entry name" value="Cysteine proteinases"/>
    <property type="match status" value="1"/>
</dbReference>
<dbReference type="PROSITE" id="PS00139">
    <property type="entry name" value="THIOL_PROTEASE_CYS"/>
    <property type="match status" value="1"/>
</dbReference>
<dbReference type="PROSITE" id="PS00639">
    <property type="entry name" value="THIOL_PROTEASE_HIS"/>
    <property type="match status" value="1"/>
</dbReference>
<accession>Q9UBX1</accession>
<accession>B2R964</accession>
<accession>O95240</accession>
<accession>Q9NSU4</accession>
<accession>Q9UKQ5</accession>
<comment type="function">
    <text>Thiol protease which is believed to participate in intracellular degradation and turnover of proteins. Has also been implicated in tumor invasion and metastasis.</text>
</comment>
<comment type="catalytic activity">
    <reaction>
        <text>The recombinant enzyme cleaves synthetic substrates with Phe and Leu (better than Val) in P2, with high specificity constant (kcat/Km) comparable to that of cathepsin L.</text>
        <dbReference type="EC" id="3.4.22.41"/>
    </reaction>
</comment>
<comment type="subcellular location">
    <subcellularLocation>
        <location>Lysosome</location>
    </subcellularLocation>
</comment>
<comment type="tissue specificity">
    <text>High expression levels in heart, skeletal muscle, brain, testis and ovary; moderate levels in prostate, placenta, liver and colon; and no detectable expression in peripheral leukocytes and thymus.</text>
</comment>
<comment type="disease" evidence="7">
    <disease id="DI-03853">
        <name>Ceroid lipofuscinosis, neuronal, 13 (Kufs type)</name>
        <acronym>CLN13</acronym>
        <description>A form of neuronal ceroid lipofuscinosis characterized by adult onset of progressive cognitive decline and motor dysfunction leading to dementia and often early death. Some patients develop seizures. Neuronal ceroid lipofuscinoses are progressive neurodegenerative, lysosomal storage diseases characterized by intracellular accumulation of autofluorescent liposomal material. CLN13 inheritance is autosomal recessive.</description>
        <dbReference type="MIM" id="615362"/>
    </disease>
    <text>The disease is caused by variants affecting the gene represented in this entry.</text>
</comment>
<comment type="similarity">
    <text evidence="3 4">Belongs to the peptidase C1 family.</text>
</comment>
<evidence type="ECO:0000250" key="1"/>
<evidence type="ECO:0000255" key="2"/>
<evidence type="ECO:0000255" key="3">
    <source>
        <dbReference type="PROSITE-ProRule" id="PRU10088"/>
    </source>
</evidence>
<evidence type="ECO:0000255" key="4">
    <source>
        <dbReference type="PROSITE-ProRule" id="PRU10089"/>
    </source>
</evidence>
<evidence type="ECO:0000269" key="5">
    <source>
    </source>
</evidence>
<evidence type="ECO:0000269" key="6">
    <source>
    </source>
</evidence>
<evidence type="ECO:0000269" key="7">
    <source>
    </source>
</evidence>
<evidence type="ECO:0000305" key="8"/>
<evidence type="ECO:0007829" key="9">
    <source>
        <dbReference type="PDB" id="1M6D"/>
    </source>
</evidence>
<organism>
    <name type="scientific">Homo sapiens</name>
    <name type="common">Human</name>
    <dbReference type="NCBI Taxonomy" id="9606"/>
    <lineage>
        <taxon>Eukaryota</taxon>
        <taxon>Metazoa</taxon>
        <taxon>Chordata</taxon>
        <taxon>Craniata</taxon>
        <taxon>Vertebrata</taxon>
        <taxon>Euteleostomi</taxon>
        <taxon>Mammalia</taxon>
        <taxon>Eutheria</taxon>
        <taxon>Euarchontoglires</taxon>
        <taxon>Primates</taxon>
        <taxon>Haplorrhini</taxon>
        <taxon>Catarrhini</taxon>
        <taxon>Hominidae</taxon>
        <taxon>Homo</taxon>
    </lineage>
</organism>
<reference key="1">
    <citation type="journal article" date="1999" name="J. Biol. Chem.">
        <title>Molecular cloning and structural and functional characterization of human cathepsin F, a new cysteine proteinase of the papain family with a long propeptide domain.</title>
        <authorList>
            <person name="Santamaria I."/>
            <person name="Velasco G."/>
            <person name="Pendas A.M."/>
            <person name="Paz A."/>
            <person name="Lopez-Otin C."/>
        </authorList>
    </citation>
    <scope>NUCLEOTIDE SEQUENCE [MRNA]</scope>
    <source>
        <tissue>Prostate</tissue>
    </source>
</reference>
<reference key="2">
    <citation type="journal article" date="1999" name="Biochem. Biophys. Res. Commun.">
        <title>Full-length cDNA of human cathepsin F predicts the presence of a cystatin domain at the N-terminus of the cysteine protease zymogen.</title>
        <authorList>
            <person name="Naegler D.K."/>
            <person name="Sulea T."/>
            <person name="Menard R."/>
        </authorList>
    </citation>
    <scope>NUCLEOTIDE SEQUENCE [MRNA]</scope>
    <source>
        <tissue>Ovary</tissue>
    </source>
</reference>
<reference key="3">
    <citation type="journal article" date="1999" name="Biol. Chem.">
        <title>The human cathepsin F gene -- a fusion product between an ancestral cathepsin and cystatin gene.</title>
        <authorList>
            <person name="Wex T."/>
            <person name="Wex H."/>
            <person name="Broemme D."/>
        </authorList>
    </citation>
    <scope>NUCLEOTIDE SEQUENCE [GENOMIC DNA]</scope>
</reference>
<reference key="4">
    <citation type="journal article" date="1999" name="Biochem. Biophys. Res. Commun.">
        <title>Human cathepsins F and W: a new subgroup of cathepsins.</title>
        <authorList>
            <person name="Wex T."/>
            <person name="Levy B."/>
            <person name="Wex H."/>
            <person name="Bromme D."/>
        </authorList>
    </citation>
    <scope>NUCLEOTIDE SEQUENCE [GENOMIC DNA]</scope>
</reference>
<reference key="5">
    <citation type="submission" date="1999-03" db="EMBL/GenBank/DDBJ databases">
        <title>Cathepsin F, a novel cysteine protease with an extremely long propeptide.</title>
        <authorList>
            <person name="Deussing J."/>
            <person name="Tisljar K."/>
            <person name="Papazoglou A."/>
            <person name="Peters C."/>
        </authorList>
    </citation>
    <scope>NUCLEOTIDE SEQUENCE [MRNA]</scope>
    <source>
        <tissue>Kidney</tissue>
    </source>
</reference>
<reference key="6">
    <citation type="journal article" date="2004" name="Nat. Genet.">
        <title>Complete sequencing and characterization of 21,243 full-length human cDNAs.</title>
        <authorList>
            <person name="Ota T."/>
            <person name="Suzuki Y."/>
            <person name="Nishikawa T."/>
            <person name="Otsuki T."/>
            <person name="Sugiyama T."/>
            <person name="Irie R."/>
            <person name="Wakamatsu A."/>
            <person name="Hayashi K."/>
            <person name="Sato H."/>
            <person name="Nagai K."/>
            <person name="Kimura K."/>
            <person name="Makita H."/>
            <person name="Sekine M."/>
            <person name="Obayashi M."/>
            <person name="Nishi T."/>
            <person name="Shibahara T."/>
            <person name="Tanaka T."/>
            <person name="Ishii S."/>
            <person name="Yamamoto J."/>
            <person name="Saito K."/>
            <person name="Kawai Y."/>
            <person name="Isono Y."/>
            <person name="Nakamura Y."/>
            <person name="Nagahari K."/>
            <person name="Murakami K."/>
            <person name="Yasuda T."/>
            <person name="Iwayanagi T."/>
            <person name="Wagatsuma M."/>
            <person name="Shiratori A."/>
            <person name="Sudo H."/>
            <person name="Hosoiri T."/>
            <person name="Kaku Y."/>
            <person name="Kodaira H."/>
            <person name="Kondo H."/>
            <person name="Sugawara M."/>
            <person name="Takahashi M."/>
            <person name="Kanda K."/>
            <person name="Yokoi T."/>
            <person name="Furuya T."/>
            <person name="Kikkawa E."/>
            <person name="Omura Y."/>
            <person name="Abe K."/>
            <person name="Kamihara K."/>
            <person name="Katsuta N."/>
            <person name="Sato K."/>
            <person name="Tanikawa M."/>
            <person name="Yamazaki M."/>
            <person name="Ninomiya K."/>
            <person name="Ishibashi T."/>
            <person name="Yamashita H."/>
            <person name="Murakawa K."/>
            <person name="Fujimori K."/>
            <person name="Tanai H."/>
            <person name="Kimata M."/>
            <person name="Watanabe M."/>
            <person name="Hiraoka S."/>
            <person name="Chiba Y."/>
            <person name="Ishida S."/>
            <person name="Ono Y."/>
            <person name="Takiguchi S."/>
            <person name="Watanabe S."/>
            <person name="Yosida M."/>
            <person name="Hotuta T."/>
            <person name="Kusano J."/>
            <person name="Kanehori K."/>
            <person name="Takahashi-Fujii A."/>
            <person name="Hara H."/>
            <person name="Tanase T.-O."/>
            <person name="Nomura Y."/>
            <person name="Togiya S."/>
            <person name="Komai F."/>
            <person name="Hara R."/>
            <person name="Takeuchi K."/>
            <person name="Arita M."/>
            <person name="Imose N."/>
            <person name="Musashino K."/>
            <person name="Yuuki H."/>
            <person name="Oshima A."/>
            <person name="Sasaki N."/>
            <person name="Aotsuka S."/>
            <person name="Yoshikawa Y."/>
            <person name="Matsunawa H."/>
            <person name="Ichihara T."/>
            <person name="Shiohata N."/>
            <person name="Sano S."/>
            <person name="Moriya S."/>
            <person name="Momiyama H."/>
            <person name="Satoh N."/>
            <person name="Takami S."/>
            <person name="Terashima Y."/>
            <person name="Suzuki O."/>
            <person name="Nakagawa S."/>
            <person name="Senoh A."/>
            <person name="Mizoguchi H."/>
            <person name="Goto Y."/>
            <person name="Shimizu F."/>
            <person name="Wakebe H."/>
            <person name="Hishigaki H."/>
            <person name="Watanabe T."/>
            <person name="Sugiyama A."/>
            <person name="Takemoto M."/>
            <person name="Kawakami B."/>
            <person name="Yamazaki M."/>
            <person name="Watanabe K."/>
            <person name="Kumagai A."/>
            <person name="Itakura S."/>
            <person name="Fukuzumi Y."/>
            <person name="Fujimori Y."/>
            <person name="Komiyama M."/>
            <person name="Tashiro H."/>
            <person name="Tanigami A."/>
            <person name="Fujiwara T."/>
            <person name="Ono T."/>
            <person name="Yamada K."/>
            <person name="Fujii Y."/>
            <person name="Ozaki K."/>
            <person name="Hirao M."/>
            <person name="Ohmori Y."/>
            <person name="Kawabata A."/>
            <person name="Hikiji T."/>
            <person name="Kobatake N."/>
            <person name="Inagaki H."/>
            <person name="Ikema Y."/>
            <person name="Okamoto S."/>
            <person name="Okitani R."/>
            <person name="Kawakami T."/>
            <person name="Noguchi S."/>
            <person name="Itoh T."/>
            <person name="Shigeta K."/>
            <person name="Senba T."/>
            <person name="Matsumura K."/>
            <person name="Nakajima Y."/>
            <person name="Mizuno T."/>
            <person name="Morinaga M."/>
            <person name="Sasaki M."/>
            <person name="Togashi T."/>
            <person name="Oyama M."/>
            <person name="Hata H."/>
            <person name="Watanabe M."/>
            <person name="Komatsu T."/>
            <person name="Mizushima-Sugano J."/>
            <person name="Satoh T."/>
            <person name="Shirai Y."/>
            <person name="Takahashi Y."/>
            <person name="Nakagawa K."/>
            <person name="Okumura K."/>
            <person name="Nagase T."/>
            <person name="Nomura N."/>
            <person name="Kikuchi H."/>
            <person name="Masuho Y."/>
            <person name="Yamashita R."/>
            <person name="Nakai K."/>
            <person name="Yada T."/>
            <person name="Nakamura Y."/>
            <person name="Ohara O."/>
            <person name="Isogai T."/>
            <person name="Sugano S."/>
        </authorList>
    </citation>
    <scope>NUCLEOTIDE SEQUENCE [LARGE SCALE MRNA]</scope>
</reference>
<reference key="7">
    <citation type="journal article" date="2004" name="Genome Res.">
        <title>The status, quality, and expansion of the NIH full-length cDNA project: the Mammalian Gene Collection (MGC).</title>
        <authorList>
            <consortium name="The MGC Project Team"/>
        </authorList>
    </citation>
    <scope>NUCLEOTIDE SEQUENCE [LARGE SCALE MRNA]</scope>
    <source>
        <tissue>Lung</tissue>
        <tissue>Testis</tissue>
    </source>
</reference>
<reference key="8">
    <citation type="journal article" date="1998" name="J. Biol. Chem.">
        <title>Human cathepsin F. Molecular cloning, functional expression, tissue localization, and enzymatic characterization.</title>
        <authorList>
            <person name="Wang B."/>
            <person name="Shi G.-P."/>
            <person name="Yao P.M."/>
            <person name="Li Z."/>
            <person name="Chapman H.A."/>
            <person name="Broemme D."/>
        </authorList>
    </citation>
    <scope>NUCLEOTIDE SEQUENCE [MRNA] OF 147-484</scope>
    <scope>CHARACTERIZATION</scope>
    <source>
        <tissue>Brain</tissue>
        <tissue>Smooth muscle</tissue>
    </source>
</reference>
<reference key="9">
    <citation type="journal article" date="2007" name="BMC Genomics">
        <title>The full-ORF clone resource of the German cDNA consortium.</title>
        <authorList>
            <person name="Bechtel S."/>
            <person name="Rosenfelder H."/>
            <person name="Duda A."/>
            <person name="Schmidt C.P."/>
            <person name="Ernst U."/>
            <person name="Wellenreuther R."/>
            <person name="Mehrle A."/>
            <person name="Schuster C."/>
            <person name="Bahr A."/>
            <person name="Bloecker H."/>
            <person name="Heubner D."/>
            <person name="Hoerlein A."/>
            <person name="Michel G."/>
            <person name="Wedler H."/>
            <person name="Koehrer K."/>
            <person name="Ottenwaelder B."/>
            <person name="Poustka A."/>
            <person name="Wiemann S."/>
            <person name="Schupp I."/>
        </authorList>
    </citation>
    <scope>NUCLEOTIDE SEQUENCE [LARGE SCALE MRNA] OF 161-484</scope>
    <source>
        <tissue>Testis</tissue>
    </source>
</reference>
<reference key="10">
    <citation type="journal article" date="2009" name="J. Proteome Res.">
        <title>Glycoproteomics analysis of human liver tissue by combination of multiple enzyme digestion and hydrazide chemistry.</title>
        <authorList>
            <person name="Chen R."/>
            <person name="Jiang X."/>
            <person name="Sun D."/>
            <person name="Han G."/>
            <person name="Wang F."/>
            <person name="Ye M."/>
            <person name="Wang L."/>
            <person name="Zou H."/>
        </authorList>
    </citation>
    <scope>GLYCOSYLATION [LARGE SCALE ANALYSIS] AT ASN-367; ASN-378 AND ASN-440</scope>
    <source>
        <tissue>Liver</tissue>
    </source>
</reference>
<reference key="11">
    <citation type="journal article" date="2002" name="J. Mol. Biol.">
        <title>The crystal structure of human cathepsin F and its implications for the development of novel immunomodulators.</title>
        <authorList>
            <person name="Somoza J.R."/>
            <person name="Palmer J.T."/>
            <person name="Ho J.D."/>
        </authorList>
    </citation>
    <scope>X-RAY CRYSTALLOGRAPHY (1.7 ANGSTROMS) OF 271-484</scope>
    <scope>ACTIVE SITE</scope>
    <scope>DISULFIDE BONDS</scope>
</reference>
<reference key="12">
    <citation type="journal article" date="2013" name="Hum. Mol. Genet.">
        <title>Cathepsin F mutations cause Type B Kufs disease, an adult-onset neuronal ceroid lipofuscinosis.</title>
        <authorList>
            <person name="Smith K.R."/>
            <person name="Dahl H.H."/>
            <person name="Canafoglia L."/>
            <person name="Andermann E."/>
            <person name="Damiano J."/>
            <person name="Morbin M."/>
            <person name="Bruni A.C."/>
            <person name="Giaccone G."/>
            <person name="Cossette P."/>
            <person name="Saftig P."/>
            <person name="Groetzinger J."/>
            <person name="Schwake M."/>
            <person name="Andermann F."/>
            <person name="Staropoli J.F."/>
            <person name="Sims K.B."/>
            <person name="Mole S.E."/>
            <person name="Franceschetti S."/>
            <person name="Alexander N.A."/>
            <person name="Cooper J.D."/>
            <person name="Chapman H.A."/>
            <person name="Carpenter S."/>
            <person name="Berkovic S.F."/>
            <person name="Bahlo M."/>
        </authorList>
    </citation>
    <scope>VARIANTS CLN13 CYS-231; ARG-321; ALA-458 AND LEU-480</scope>
</reference>